<keyword id="KW-0963">Cytoplasm</keyword>
<keyword id="KW-0324">Glycolysis</keyword>
<keyword id="KW-0456">Lyase</keyword>
<keyword id="KW-0460">Magnesium</keyword>
<keyword id="KW-0479">Metal-binding</keyword>
<keyword id="KW-1185">Reference proteome</keyword>
<keyword id="KW-0964">Secreted</keyword>
<protein>
    <recommendedName>
        <fullName evidence="1">Enolase</fullName>
        <ecNumber evidence="1">4.2.1.11</ecNumber>
    </recommendedName>
    <alternativeName>
        <fullName evidence="1">2-phospho-D-glycerate hydro-lyase</fullName>
    </alternativeName>
    <alternativeName>
        <fullName evidence="1">2-phosphoglycerate dehydratase</fullName>
    </alternativeName>
</protein>
<organism>
    <name type="scientific">Xanthomonas oryzae pv. oryzae (strain KACC10331 / KXO85)</name>
    <dbReference type="NCBI Taxonomy" id="291331"/>
    <lineage>
        <taxon>Bacteria</taxon>
        <taxon>Pseudomonadati</taxon>
        <taxon>Pseudomonadota</taxon>
        <taxon>Gammaproteobacteria</taxon>
        <taxon>Lysobacterales</taxon>
        <taxon>Lysobacteraceae</taxon>
        <taxon>Xanthomonas</taxon>
    </lineage>
</organism>
<evidence type="ECO:0000255" key="1">
    <source>
        <dbReference type="HAMAP-Rule" id="MF_00318"/>
    </source>
</evidence>
<evidence type="ECO:0000305" key="2"/>
<reference key="1">
    <citation type="journal article" date="2005" name="Nucleic Acids Res.">
        <title>The genome sequence of Xanthomonas oryzae pathovar oryzae KACC10331, the bacterial blight pathogen of rice.</title>
        <authorList>
            <person name="Lee B.-M."/>
            <person name="Park Y.-J."/>
            <person name="Park D.-S."/>
            <person name="Kang H.-W."/>
            <person name="Kim J.-G."/>
            <person name="Song E.-S."/>
            <person name="Park I.-C."/>
            <person name="Yoon U.-H."/>
            <person name="Hahn J.-H."/>
            <person name="Koo B.-S."/>
            <person name="Lee G.-B."/>
            <person name="Kim H."/>
            <person name="Park H.-S."/>
            <person name="Yoon K.-O."/>
            <person name="Kim J.-H."/>
            <person name="Jung C.-H."/>
            <person name="Koh N.-H."/>
            <person name="Seo J.-S."/>
            <person name="Go S.-J."/>
        </authorList>
    </citation>
    <scope>NUCLEOTIDE SEQUENCE [LARGE SCALE GENOMIC DNA]</scope>
    <source>
        <strain>KACC10331 / KXO85</strain>
    </source>
</reference>
<feature type="chain" id="PRO_0000134013" description="Enolase">
    <location>
        <begin position="1"/>
        <end position="430"/>
    </location>
</feature>
<feature type="active site" description="Proton donor" evidence="1">
    <location>
        <position position="207"/>
    </location>
</feature>
<feature type="active site" description="Proton acceptor" evidence="1">
    <location>
        <position position="339"/>
    </location>
</feature>
<feature type="binding site" evidence="1">
    <location>
        <position position="165"/>
    </location>
    <ligand>
        <name>(2R)-2-phosphoglycerate</name>
        <dbReference type="ChEBI" id="CHEBI:58289"/>
    </ligand>
</feature>
<feature type="binding site" evidence="1">
    <location>
        <position position="244"/>
    </location>
    <ligand>
        <name>Mg(2+)</name>
        <dbReference type="ChEBI" id="CHEBI:18420"/>
    </ligand>
</feature>
<feature type="binding site" evidence="1">
    <location>
        <position position="287"/>
    </location>
    <ligand>
        <name>Mg(2+)</name>
        <dbReference type="ChEBI" id="CHEBI:18420"/>
    </ligand>
</feature>
<feature type="binding site" evidence="1">
    <location>
        <position position="314"/>
    </location>
    <ligand>
        <name>Mg(2+)</name>
        <dbReference type="ChEBI" id="CHEBI:18420"/>
    </ligand>
</feature>
<feature type="binding site" evidence="1">
    <location>
        <position position="339"/>
    </location>
    <ligand>
        <name>(2R)-2-phosphoglycerate</name>
        <dbReference type="ChEBI" id="CHEBI:58289"/>
    </ligand>
</feature>
<feature type="binding site" evidence="1">
    <location>
        <position position="368"/>
    </location>
    <ligand>
        <name>(2R)-2-phosphoglycerate</name>
        <dbReference type="ChEBI" id="CHEBI:58289"/>
    </ligand>
</feature>
<feature type="binding site" evidence="1">
    <location>
        <position position="369"/>
    </location>
    <ligand>
        <name>(2R)-2-phosphoglycerate</name>
        <dbReference type="ChEBI" id="CHEBI:58289"/>
    </ligand>
</feature>
<feature type="binding site" evidence="1">
    <location>
        <position position="390"/>
    </location>
    <ligand>
        <name>(2R)-2-phosphoglycerate</name>
        <dbReference type="ChEBI" id="CHEBI:58289"/>
    </ligand>
</feature>
<name>ENO_XANOR</name>
<dbReference type="EC" id="4.2.1.11" evidence="1"/>
<dbReference type="EMBL" id="AE013598">
    <property type="protein sequence ID" value="AAW76217.1"/>
    <property type="status" value="ALT_INIT"/>
    <property type="molecule type" value="Genomic_DNA"/>
</dbReference>
<dbReference type="SMR" id="Q5GYK4"/>
<dbReference type="STRING" id="291331.XOO2963"/>
<dbReference type="KEGG" id="xoo:XOO2963"/>
<dbReference type="HOGENOM" id="CLU_031223_2_1_6"/>
<dbReference type="UniPathway" id="UPA00109">
    <property type="reaction ID" value="UER00187"/>
</dbReference>
<dbReference type="Proteomes" id="UP000006735">
    <property type="component" value="Chromosome"/>
</dbReference>
<dbReference type="GO" id="GO:0009986">
    <property type="term" value="C:cell surface"/>
    <property type="evidence" value="ECO:0007669"/>
    <property type="project" value="UniProtKB-SubCell"/>
</dbReference>
<dbReference type="GO" id="GO:0005576">
    <property type="term" value="C:extracellular region"/>
    <property type="evidence" value="ECO:0007669"/>
    <property type="project" value="UniProtKB-SubCell"/>
</dbReference>
<dbReference type="GO" id="GO:0000015">
    <property type="term" value="C:phosphopyruvate hydratase complex"/>
    <property type="evidence" value="ECO:0007669"/>
    <property type="project" value="InterPro"/>
</dbReference>
<dbReference type="GO" id="GO:0000287">
    <property type="term" value="F:magnesium ion binding"/>
    <property type="evidence" value="ECO:0007669"/>
    <property type="project" value="UniProtKB-UniRule"/>
</dbReference>
<dbReference type="GO" id="GO:0004634">
    <property type="term" value="F:phosphopyruvate hydratase activity"/>
    <property type="evidence" value="ECO:0007669"/>
    <property type="project" value="UniProtKB-UniRule"/>
</dbReference>
<dbReference type="GO" id="GO:0006096">
    <property type="term" value="P:glycolytic process"/>
    <property type="evidence" value="ECO:0007669"/>
    <property type="project" value="UniProtKB-UniRule"/>
</dbReference>
<dbReference type="CDD" id="cd03313">
    <property type="entry name" value="enolase"/>
    <property type="match status" value="1"/>
</dbReference>
<dbReference type="FunFam" id="3.20.20.120:FF:000001">
    <property type="entry name" value="Enolase"/>
    <property type="match status" value="1"/>
</dbReference>
<dbReference type="FunFam" id="3.30.390.10:FF:000001">
    <property type="entry name" value="Enolase"/>
    <property type="match status" value="1"/>
</dbReference>
<dbReference type="Gene3D" id="3.20.20.120">
    <property type="entry name" value="Enolase-like C-terminal domain"/>
    <property type="match status" value="1"/>
</dbReference>
<dbReference type="Gene3D" id="3.30.390.10">
    <property type="entry name" value="Enolase-like, N-terminal domain"/>
    <property type="match status" value="1"/>
</dbReference>
<dbReference type="HAMAP" id="MF_00318">
    <property type="entry name" value="Enolase"/>
    <property type="match status" value="1"/>
</dbReference>
<dbReference type="InterPro" id="IPR000941">
    <property type="entry name" value="Enolase"/>
</dbReference>
<dbReference type="InterPro" id="IPR036849">
    <property type="entry name" value="Enolase-like_C_sf"/>
</dbReference>
<dbReference type="InterPro" id="IPR029017">
    <property type="entry name" value="Enolase-like_N"/>
</dbReference>
<dbReference type="InterPro" id="IPR020810">
    <property type="entry name" value="Enolase_C"/>
</dbReference>
<dbReference type="InterPro" id="IPR020809">
    <property type="entry name" value="Enolase_CS"/>
</dbReference>
<dbReference type="InterPro" id="IPR020811">
    <property type="entry name" value="Enolase_N"/>
</dbReference>
<dbReference type="NCBIfam" id="TIGR01060">
    <property type="entry name" value="eno"/>
    <property type="match status" value="1"/>
</dbReference>
<dbReference type="PANTHER" id="PTHR11902">
    <property type="entry name" value="ENOLASE"/>
    <property type="match status" value="1"/>
</dbReference>
<dbReference type="PANTHER" id="PTHR11902:SF1">
    <property type="entry name" value="ENOLASE"/>
    <property type="match status" value="1"/>
</dbReference>
<dbReference type="Pfam" id="PF00113">
    <property type="entry name" value="Enolase_C"/>
    <property type="match status" value="1"/>
</dbReference>
<dbReference type="Pfam" id="PF03952">
    <property type="entry name" value="Enolase_N"/>
    <property type="match status" value="1"/>
</dbReference>
<dbReference type="PIRSF" id="PIRSF001400">
    <property type="entry name" value="Enolase"/>
    <property type="match status" value="1"/>
</dbReference>
<dbReference type="PRINTS" id="PR00148">
    <property type="entry name" value="ENOLASE"/>
</dbReference>
<dbReference type="SFLD" id="SFLDS00001">
    <property type="entry name" value="Enolase"/>
    <property type="match status" value="1"/>
</dbReference>
<dbReference type="SFLD" id="SFLDF00002">
    <property type="entry name" value="enolase"/>
    <property type="match status" value="1"/>
</dbReference>
<dbReference type="SMART" id="SM01192">
    <property type="entry name" value="Enolase_C"/>
    <property type="match status" value="1"/>
</dbReference>
<dbReference type="SMART" id="SM01193">
    <property type="entry name" value="Enolase_N"/>
    <property type="match status" value="1"/>
</dbReference>
<dbReference type="SUPFAM" id="SSF51604">
    <property type="entry name" value="Enolase C-terminal domain-like"/>
    <property type="match status" value="1"/>
</dbReference>
<dbReference type="SUPFAM" id="SSF54826">
    <property type="entry name" value="Enolase N-terminal domain-like"/>
    <property type="match status" value="1"/>
</dbReference>
<dbReference type="PROSITE" id="PS00164">
    <property type="entry name" value="ENOLASE"/>
    <property type="match status" value="1"/>
</dbReference>
<accession>Q5GYK4</accession>
<sequence>MTTIAKILAREILDSRGNPTLEAEVTLDDGSFGRAAVPSGASTGTKEAVELRDGDKTRYLGKGVRHAVDNVNGTIAETLKNFDAADQQGLDRRLIDLDGTENKGRLGANALLGVSLAAAHAVAASRKQPLWQYLSTITESDVALPVPMMNIINGGAHADNNVDFQEFMVLPVGCSSFSEALRAGTEIFYSLKSVLKGHGLSTAVGDEGGFAPDFRSNVEALDTILEAIGKAGYTAGEDILLGLDVASSEFYDNGKYNLVGENKRLTSEQFVDFLADWVAQYPIISIEDGLAEDDWAGWKLLTDRVGKHVQLVGDDLFVTNPKIFKQGIDSGTANAILIKVNQIGTLTETLEAIAMAHAANYASIVSHRSGETEDTTIADIAVATTATQIKTGSLCRSDRVAKYNQLLRIEQALGSDARYAGRDAFVSIKR</sequence>
<proteinExistence type="inferred from homology"/>
<gene>
    <name evidence="1" type="primary">eno</name>
    <name type="ordered locus">XOO2963</name>
</gene>
<comment type="function">
    <text evidence="1">Catalyzes the reversible conversion of 2-phosphoglycerate (2-PG) into phosphoenolpyruvate (PEP). It is essential for the degradation of carbohydrates via glycolysis.</text>
</comment>
<comment type="catalytic activity">
    <reaction evidence="1">
        <text>(2R)-2-phosphoglycerate = phosphoenolpyruvate + H2O</text>
        <dbReference type="Rhea" id="RHEA:10164"/>
        <dbReference type="ChEBI" id="CHEBI:15377"/>
        <dbReference type="ChEBI" id="CHEBI:58289"/>
        <dbReference type="ChEBI" id="CHEBI:58702"/>
        <dbReference type="EC" id="4.2.1.11"/>
    </reaction>
</comment>
<comment type="cofactor">
    <cofactor evidence="1">
        <name>Mg(2+)</name>
        <dbReference type="ChEBI" id="CHEBI:18420"/>
    </cofactor>
    <text evidence="1">Binds a second Mg(2+) ion via substrate during catalysis.</text>
</comment>
<comment type="pathway">
    <text evidence="1">Carbohydrate degradation; glycolysis; pyruvate from D-glyceraldehyde 3-phosphate: step 4/5.</text>
</comment>
<comment type="subunit">
    <text evidence="1">Component of the RNA degradosome, a multiprotein complex involved in RNA processing and mRNA degradation.</text>
</comment>
<comment type="subcellular location">
    <subcellularLocation>
        <location evidence="1">Cytoplasm</location>
    </subcellularLocation>
    <subcellularLocation>
        <location evidence="1">Secreted</location>
    </subcellularLocation>
    <subcellularLocation>
        <location evidence="1">Cell surface</location>
    </subcellularLocation>
    <text evidence="1">Fractions of enolase are present in both the cytoplasm and on the cell surface.</text>
</comment>
<comment type="similarity">
    <text evidence="1">Belongs to the enolase family.</text>
</comment>
<comment type="sequence caution" evidence="2">
    <conflict type="erroneous initiation">
        <sequence resource="EMBL-CDS" id="AAW76217"/>
    </conflict>
    <text>Extended N-terminus.</text>
</comment>